<reference key="1">
    <citation type="submission" date="2007-10" db="EMBL/GenBank/DDBJ databases">
        <title>Complete sequence of Shewanella pealeana ATCC 700345.</title>
        <authorList>
            <consortium name="US DOE Joint Genome Institute"/>
            <person name="Copeland A."/>
            <person name="Lucas S."/>
            <person name="Lapidus A."/>
            <person name="Barry K."/>
            <person name="Glavina del Rio T."/>
            <person name="Dalin E."/>
            <person name="Tice H."/>
            <person name="Pitluck S."/>
            <person name="Chertkov O."/>
            <person name="Brettin T."/>
            <person name="Bruce D."/>
            <person name="Detter J.C."/>
            <person name="Han C."/>
            <person name="Schmutz J."/>
            <person name="Larimer F."/>
            <person name="Land M."/>
            <person name="Hauser L."/>
            <person name="Kyrpides N."/>
            <person name="Kim E."/>
            <person name="Zhao J.-S.Z."/>
            <person name="Manno D."/>
            <person name="Hawari J."/>
            <person name="Richardson P."/>
        </authorList>
    </citation>
    <scope>NUCLEOTIDE SEQUENCE [LARGE SCALE GENOMIC DNA]</scope>
    <source>
        <strain>ATCC 700345 / ANG-SQ1</strain>
    </source>
</reference>
<keyword id="KW-0066">ATP synthesis</keyword>
<keyword id="KW-0997">Cell inner membrane</keyword>
<keyword id="KW-1003">Cell membrane</keyword>
<keyword id="KW-0139">CF(1)</keyword>
<keyword id="KW-0375">Hydrogen ion transport</keyword>
<keyword id="KW-0406">Ion transport</keyword>
<keyword id="KW-0472">Membrane</keyword>
<keyword id="KW-1185">Reference proteome</keyword>
<keyword id="KW-0813">Transport</keyword>
<name>ATPE_SHEPA</name>
<protein>
    <recommendedName>
        <fullName evidence="1">ATP synthase epsilon chain</fullName>
    </recommendedName>
    <alternativeName>
        <fullName evidence="1">ATP synthase F1 sector epsilon subunit</fullName>
    </alternativeName>
    <alternativeName>
        <fullName evidence="1">F-ATPase epsilon subunit</fullName>
    </alternativeName>
</protein>
<accession>A8HAG2</accession>
<organism>
    <name type="scientific">Shewanella pealeana (strain ATCC 700345 / ANG-SQ1)</name>
    <dbReference type="NCBI Taxonomy" id="398579"/>
    <lineage>
        <taxon>Bacteria</taxon>
        <taxon>Pseudomonadati</taxon>
        <taxon>Pseudomonadota</taxon>
        <taxon>Gammaproteobacteria</taxon>
        <taxon>Alteromonadales</taxon>
        <taxon>Shewanellaceae</taxon>
        <taxon>Shewanella</taxon>
    </lineage>
</organism>
<sequence>MAAMTVQLDMVSAENHIFSGRVAQLQVSGTEGELGIMPGHAALLTSIKPGMARIVKQNGSEEVFYLSGGILEVQPSSISVLADVVLRADEIDEQAAAEAKLRAETAMAGAGADFNYAAAAVELAQAIAQLRVVETIKKNIAR</sequence>
<evidence type="ECO:0000255" key="1">
    <source>
        <dbReference type="HAMAP-Rule" id="MF_00530"/>
    </source>
</evidence>
<proteinExistence type="inferred from homology"/>
<gene>
    <name evidence="1" type="primary">atpC</name>
    <name type="ordered locus">Spea_4239</name>
</gene>
<comment type="function">
    <text evidence="1">Produces ATP from ADP in the presence of a proton gradient across the membrane.</text>
</comment>
<comment type="subunit">
    <text evidence="1">F-type ATPases have 2 components, CF(1) - the catalytic core - and CF(0) - the membrane proton channel. CF(1) has five subunits: alpha(3), beta(3), gamma(1), delta(1), epsilon(1). CF(0) has three main subunits: a, b and c.</text>
</comment>
<comment type="subcellular location">
    <subcellularLocation>
        <location evidence="1">Cell inner membrane</location>
        <topology evidence="1">Peripheral membrane protein</topology>
    </subcellularLocation>
</comment>
<comment type="similarity">
    <text evidence="1">Belongs to the ATPase epsilon chain family.</text>
</comment>
<dbReference type="EMBL" id="CP000851">
    <property type="protein sequence ID" value="ABV89549.1"/>
    <property type="molecule type" value="Genomic_DNA"/>
</dbReference>
<dbReference type="RefSeq" id="WP_012157426.1">
    <property type="nucleotide sequence ID" value="NC_009901.1"/>
</dbReference>
<dbReference type="SMR" id="A8HAG2"/>
<dbReference type="STRING" id="398579.Spea_4239"/>
<dbReference type="KEGG" id="spl:Spea_4239"/>
<dbReference type="eggNOG" id="COG0355">
    <property type="taxonomic scope" value="Bacteria"/>
</dbReference>
<dbReference type="HOGENOM" id="CLU_084338_2_0_6"/>
<dbReference type="OrthoDB" id="9791445at2"/>
<dbReference type="Proteomes" id="UP000002608">
    <property type="component" value="Chromosome"/>
</dbReference>
<dbReference type="GO" id="GO:0005886">
    <property type="term" value="C:plasma membrane"/>
    <property type="evidence" value="ECO:0007669"/>
    <property type="project" value="UniProtKB-SubCell"/>
</dbReference>
<dbReference type="GO" id="GO:0045259">
    <property type="term" value="C:proton-transporting ATP synthase complex"/>
    <property type="evidence" value="ECO:0007669"/>
    <property type="project" value="UniProtKB-KW"/>
</dbReference>
<dbReference type="GO" id="GO:0005524">
    <property type="term" value="F:ATP binding"/>
    <property type="evidence" value="ECO:0007669"/>
    <property type="project" value="UniProtKB-UniRule"/>
</dbReference>
<dbReference type="GO" id="GO:0046933">
    <property type="term" value="F:proton-transporting ATP synthase activity, rotational mechanism"/>
    <property type="evidence" value="ECO:0007669"/>
    <property type="project" value="UniProtKB-UniRule"/>
</dbReference>
<dbReference type="CDD" id="cd12152">
    <property type="entry name" value="F1-ATPase_delta"/>
    <property type="match status" value="1"/>
</dbReference>
<dbReference type="FunFam" id="1.20.5.440:FF:000001">
    <property type="entry name" value="ATP synthase epsilon chain"/>
    <property type="match status" value="1"/>
</dbReference>
<dbReference type="FunFam" id="2.60.15.10:FF:000001">
    <property type="entry name" value="ATP synthase epsilon chain"/>
    <property type="match status" value="1"/>
</dbReference>
<dbReference type="Gene3D" id="1.20.5.440">
    <property type="entry name" value="ATP synthase delta/epsilon subunit, C-terminal domain"/>
    <property type="match status" value="1"/>
</dbReference>
<dbReference type="Gene3D" id="2.60.15.10">
    <property type="entry name" value="F0F1 ATP synthase delta/epsilon subunit, N-terminal"/>
    <property type="match status" value="1"/>
</dbReference>
<dbReference type="HAMAP" id="MF_00530">
    <property type="entry name" value="ATP_synth_epsil_bac"/>
    <property type="match status" value="1"/>
</dbReference>
<dbReference type="InterPro" id="IPR036794">
    <property type="entry name" value="ATP_F1_dsu/esu_C_sf"/>
</dbReference>
<dbReference type="InterPro" id="IPR001469">
    <property type="entry name" value="ATP_synth_F1_dsu/esu"/>
</dbReference>
<dbReference type="InterPro" id="IPR020546">
    <property type="entry name" value="ATP_synth_F1_dsu/esu_N"/>
</dbReference>
<dbReference type="InterPro" id="IPR020547">
    <property type="entry name" value="ATP_synth_F1_esu_C"/>
</dbReference>
<dbReference type="InterPro" id="IPR036771">
    <property type="entry name" value="ATPsynth_dsu/esu_N"/>
</dbReference>
<dbReference type="NCBIfam" id="TIGR01216">
    <property type="entry name" value="ATP_synt_epsi"/>
    <property type="match status" value="1"/>
</dbReference>
<dbReference type="NCBIfam" id="NF001847">
    <property type="entry name" value="PRK00571.1-4"/>
    <property type="match status" value="1"/>
</dbReference>
<dbReference type="PANTHER" id="PTHR13822">
    <property type="entry name" value="ATP SYNTHASE DELTA/EPSILON CHAIN"/>
    <property type="match status" value="1"/>
</dbReference>
<dbReference type="PANTHER" id="PTHR13822:SF10">
    <property type="entry name" value="ATP SYNTHASE EPSILON CHAIN, CHLOROPLASTIC"/>
    <property type="match status" value="1"/>
</dbReference>
<dbReference type="Pfam" id="PF00401">
    <property type="entry name" value="ATP-synt_DE"/>
    <property type="match status" value="1"/>
</dbReference>
<dbReference type="Pfam" id="PF02823">
    <property type="entry name" value="ATP-synt_DE_N"/>
    <property type="match status" value="1"/>
</dbReference>
<dbReference type="SUPFAM" id="SSF46604">
    <property type="entry name" value="Epsilon subunit of F1F0-ATP synthase C-terminal domain"/>
    <property type="match status" value="1"/>
</dbReference>
<dbReference type="SUPFAM" id="SSF51344">
    <property type="entry name" value="Epsilon subunit of F1F0-ATP synthase N-terminal domain"/>
    <property type="match status" value="1"/>
</dbReference>
<feature type="chain" id="PRO_1000081747" description="ATP synthase epsilon chain">
    <location>
        <begin position="1"/>
        <end position="142"/>
    </location>
</feature>